<feature type="chain" id="PRO_1000063951" description="2,3-bisphosphoglycerate-independent phosphoglycerate mutase">
    <location>
        <begin position="1"/>
        <end position="492"/>
    </location>
</feature>
<feature type="active site" description="Phosphoserine intermediate" evidence="1">
    <location>
        <position position="61"/>
    </location>
</feature>
<feature type="binding site" evidence="1">
    <location>
        <position position="11"/>
    </location>
    <ligand>
        <name>Mn(2+)</name>
        <dbReference type="ChEBI" id="CHEBI:29035"/>
        <label>2</label>
    </ligand>
</feature>
<feature type="binding site" evidence="1">
    <location>
        <position position="61"/>
    </location>
    <ligand>
        <name>Mn(2+)</name>
        <dbReference type="ChEBI" id="CHEBI:29035"/>
        <label>2</label>
    </ligand>
</feature>
<feature type="binding site" evidence="1">
    <location>
        <position position="118"/>
    </location>
    <ligand>
        <name>substrate</name>
    </ligand>
</feature>
<feature type="binding site" evidence="1">
    <location>
        <begin position="147"/>
        <end position="148"/>
    </location>
    <ligand>
        <name>substrate</name>
    </ligand>
</feature>
<feature type="binding site" evidence="1">
    <location>
        <position position="178"/>
    </location>
    <ligand>
        <name>substrate</name>
    </ligand>
</feature>
<feature type="binding site" evidence="1">
    <location>
        <position position="184"/>
    </location>
    <ligand>
        <name>substrate</name>
    </ligand>
</feature>
<feature type="binding site" evidence="1">
    <location>
        <begin position="248"/>
        <end position="251"/>
    </location>
    <ligand>
        <name>substrate</name>
    </ligand>
</feature>
<feature type="binding site" evidence="1">
    <location>
        <position position="320"/>
    </location>
    <ligand>
        <name>substrate</name>
    </ligand>
</feature>
<feature type="binding site" evidence="1">
    <location>
        <position position="386"/>
    </location>
    <ligand>
        <name>Mn(2+)</name>
        <dbReference type="ChEBI" id="CHEBI:29035"/>
        <label>1</label>
    </ligand>
</feature>
<feature type="binding site" evidence="1">
    <location>
        <position position="390"/>
    </location>
    <ligand>
        <name>Mn(2+)</name>
        <dbReference type="ChEBI" id="CHEBI:29035"/>
        <label>1</label>
    </ligand>
</feature>
<feature type="binding site" evidence="1">
    <location>
        <position position="427"/>
    </location>
    <ligand>
        <name>Mn(2+)</name>
        <dbReference type="ChEBI" id="CHEBI:29035"/>
        <label>2</label>
    </ligand>
</feature>
<feature type="binding site" evidence="1">
    <location>
        <position position="428"/>
    </location>
    <ligand>
        <name>Mn(2+)</name>
        <dbReference type="ChEBI" id="CHEBI:29035"/>
        <label>2</label>
    </ligand>
</feature>
<feature type="binding site" evidence="1">
    <location>
        <position position="445"/>
    </location>
    <ligand>
        <name>Mn(2+)</name>
        <dbReference type="ChEBI" id="CHEBI:29035"/>
        <label>1</label>
    </ligand>
</feature>
<keyword id="KW-0324">Glycolysis</keyword>
<keyword id="KW-0413">Isomerase</keyword>
<keyword id="KW-0464">Manganese</keyword>
<keyword id="KW-0479">Metal-binding</keyword>
<name>GPMI_CAMJD</name>
<proteinExistence type="inferred from homology"/>
<sequence>MKQKCVLIITDGIGYNKNSKFNAFEAAKKPSYEKLFKEVPNSLLKTSGLAVGLPEGQMGNSEVGHMCIGSGRIIYQNLVRINKAIKNKELEKNENLQKLLAKCKRVHIIGLYSDGGVHSMDTHFKAMLEICAKNGNEVFAHAITDGRDVSPKSGLNFIKDLKGFCENLGVHFATLCGRFYSMDRDKRWDRVKEYYECLLGKAYKVPNLLEYLQKSYDENITDEFIKATQNENYKGMREEDGIIFINFRNDRMKQLVEVLNSKDFKEFEREKVFENLLTMSVYDDKFKLPVLFEKEKIENTLAQVISKAGLSQLHTAETEKYAHVTFFFNGGKEELLENETRVLISSPKVKTYDEKPQMSAFEVCDAVKKGIEKGEDFIVVNFANGDMVGHTGDFNAAIKAVEAVDTCLGEIVECAKKHDYAFIITSDHGNCEAMQDEKGNLLTNHTTFDVFVFVQASGVSKIKANMGLSNIAASVLKILDLEIPKEMNEALF</sequence>
<reference key="1">
    <citation type="submission" date="2007-07" db="EMBL/GenBank/DDBJ databases">
        <title>Complete genome sequence of Campylobacter jejuni subsp doylei 269.97 isolated from human blood.</title>
        <authorList>
            <person name="Fouts D.E."/>
            <person name="Mongodin E.F."/>
            <person name="Puiu D."/>
            <person name="Sebastian Y."/>
            <person name="Miller W.G."/>
            <person name="Mandrell R.E."/>
            <person name="Lastovica A.J."/>
            <person name="Nelson K.E."/>
        </authorList>
    </citation>
    <scope>NUCLEOTIDE SEQUENCE [LARGE SCALE GENOMIC DNA]</scope>
    <source>
        <strain>ATCC BAA-1458 / RM4099 / 269.97</strain>
    </source>
</reference>
<dbReference type="EC" id="5.4.2.12" evidence="1"/>
<dbReference type="EMBL" id="CP000768">
    <property type="protein sequence ID" value="ABS43884.1"/>
    <property type="molecule type" value="Genomic_DNA"/>
</dbReference>
<dbReference type="SMR" id="A7H4U3"/>
<dbReference type="KEGG" id="cjd:JJD26997_1510"/>
<dbReference type="HOGENOM" id="CLU_026099_2_0_7"/>
<dbReference type="UniPathway" id="UPA00109">
    <property type="reaction ID" value="UER00186"/>
</dbReference>
<dbReference type="Proteomes" id="UP000002302">
    <property type="component" value="Chromosome"/>
</dbReference>
<dbReference type="GO" id="GO:0005829">
    <property type="term" value="C:cytosol"/>
    <property type="evidence" value="ECO:0007669"/>
    <property type="project" value="TreeGrafter"/>
</dbReference>
<dbReference type="GO" id="GO:0030145">
    <property type="term" value="F:manganese ion binding"/>
    <property type="evidence" value="ECO:0007669"/>
    <property type="project" value="UniProtKB-UniRule"/>
</dbReference>
<dbReference type="GO" id="GO:0004619">
    <property type="term" value="F:phosphoglycerate mutase activity"/>
    <property type="evidence" value="ECO:0007669"/>
    <property type="project" value="UniProtKB-EC"/>
</dbReference>
<dbReference type="GO" id="GO:0006007">
    <property type="term" value="P:glucose catabolic process"/>
    <property type="evidence" value="ECO:0007669"/>
    <property type="project" value="InterPro"/>
</dbReference>
<dbReference type="GO" id="GO:0006096">
    <property type="term" value="P:glycolytic process"/>
    <property type="evidence" value="ECO:0007669"/>
    <property type="project" value="UniProtKB-UniRule"/>
</dbReference>
<dbReference type="CDD" id="cd16010">
    <property type="entry name" value="iPGM"/>
    <property type="match status" value="1"/>
</dbReference>
<dbReference type="FunFam" id="3.40.1450.10:FF:000002">
    <property type="entry name" value="2,3-bisphosphoglycerate-independent phosphoglycerate mutase"/>
    <property type="match status" value="1"/>
</dbReference>
<dbReference type="Gene3D" id="3.40.720.10">
    <property type="entry name" value="Alkaline Phosphatase, subunit A"/>
    <property type="match status" value="1"/>
</dbReference>
<dbReference type="Gene3D" id="3.40.1450.10">
    <property type="entry name" value="BPG-independent phosphoglycerate mutase, domain B"/>
    <property type="match status" value="1"/>
</dbReference>
<dbReference type="HAMAP" id="MF_01038">
    <property type="entry name" value="GpmI"/>
    <property type="match status" value="1"/>
</dbReference>
<dbReference type="InterPro" id="IPR017850">
    <property type="entry name" value="Alkaline_phosphatase_core_sf"/>
</dbReference>
<dbReference type="InterPro" id="IPR011258">
    <property type="entry name" value="BPG-indep_PGM_N"/>
</dbReference>
<dbReference type="InterPro" id="IPR006124">
    <property type="entry name" value="Metalloenzyme"/>
</dbReference>
<dbReference type="InterPro" id="IPR036646">
    <property type="entry name" value="PGAM_B_sf"/>
</dbReference>
<dbReference type="InterPro" id="IPR005995">
    <property type="entry name" value="Pgm_bpd_ind"/>
</dbReference>
<dbReference type="NCBIfam" id="TIGR01307">
    <property type="entry name" value="pgm_bpd_ind"/>
    <property type="match status" value="1"/>
</dbReference>
<dbReference type="PANTHER" id="PTHR31637">
    <property type="entry name" value="2,3-BISPHOSPHOGLYCERATE-INDEPENDENT PHOSPHOGLYCERATE MUTASE"/>
    <property type="match status" value="1"/>
</dbReference>
<dbReference type="PANTHER" id="PTHR31637:SF0">
    <property type="entry name" value="2,3-BISPHOSPHOGLYCERATE-INDEPENDENT PHOSPHOGLYCERATE MUTASE"/>
    <property type="match status" value="1"/>
</dbReference>
<dbReference type="Pfam" id="PF06415">
    <property type="entry name" value="iPGM_N"/>
    <property type="match status" value="1"/>
</dbReference>
<dbReference type="Pfam" id="PF01676">
    <property type="entry name" value="Metalloenzyme"/>
    <property type="match status" value="1"/>
</dbReference>
<dbReference type="PIRSF" id="PIRSF001492">
    <property type="entry name" value="IPGAM"/>
    <property type="match status" value="1"/>
</dbReference>
<dbReference type="SUPFAM" id="SSF64158">
    <property type="entry name" value="2,3-Bisphosphoglycerate-independent phosphoglycerate mutase, substrate-binding domain"/>
    <property type="match status" value="1"/>
</dbReference>
<dbReference type="SUPFAM" id="SSF53649">
    <property type="entry name" value="Alkaline phosphatase-like"/>
    <property type="match status" value="1"/>
</dbReference>
<accession>A7H4U3</accession>
<gene>
    <name evidence="1" type="primary">gpmI</name>
    <name type="ordered locus">JJD26997_1510</name>
</gene>
<protein>
    <recommendedName>
        <fullName evidence="1">2,3-bisphosphoglycerate-independent phosphoglycerate mutase</fullName>
        <shortName evidence="1">BPG-independent PGAM</shortName>
        <shortName evidence="1">Phosphoglyceromutase</shortName>
        <shortName evidence="1">iPGM</shortName>
        <ecNumber evidence="1">5.4.2.12</ecNumber>
    </recommendedName>
</protein>
<organism>
    <name type="scientific">Campylobacter jejuni subsp. doylei (strain ATCC BAA-1458 / RM4099 / 269.97)</name>
    <dbReference type="NCBI Taxonomy" id="360109"/>
    <lineage>
        <taxon>Bacteria</taxon>
        <taxon>Pseudomonadati</taxon>
        <taxon>Campylobacterota</taxon>
        <taxon>Epsilonproteobacteria</taxon>
        <taxon>Campylobacterales</taxon>
        <taxon>Campylobacteraceae</taxon>
        <taxon>Campylobacter</taxon>
    </lineage>
</organism>
<evidence type="ECO:0000255" key="1">
    <source>
        <dbReference type="HAMAP-Rule" id="MF_01038"/>
    </source>
</evidence>
<comment type="function">
    <text evidence="1">Catalyzes the interconversion of 2-phosphoglycerate and 3-phosphoglycerate.</text>
</comment>
<comment type="catalytic activity">
    <reaction evidence="1">
        <text>(2R)-2-phosphoglycerate = (2R)-3-phosphoglycerate</text>
        <dbReference type="Rhea" id="RHEA:15901"/>
        <dbReference type="ChEBI" id="CHEBI:58272"/>
        <dbReference type="ChEBI" id="CHEBI:58289"/>
        <dbReference type="EC" id="5.4.2.12"/>
    </reaction>
</comment>
<comment type="cofactor">
    <cofactor evidence="1">
        <name>Mn(2+)</name>
        <dbReference type="ChEBI" id="CHEBI:29035"/>
    </cofactor>
    <text evidence="1">Binds 2 manganese ions per subunit.</text>
</comment>
<comment type="pathway">
    <text evidence="1">Carbohydrate degradation; glycolysis; pyruvate from D-glyceraldehyde 3-phosphate: step 3/5.</text>
</comment>
<comment type="subunit">
    <text evidence="1">Monomer.</text>
</comment>
<comment type="similarity">
    <text evidence="1">Belongs to the BPG-independent phosphoglycerate mutase family.</text>
</comment>